<keyword id="KW-0002">3D-structure</keyword>
<keyword id="KW-0010">Activator</keyword>
<keyword id="KW-0539">Nucleus</keyword>
<keyword id="KW-0597">Phosphoprotein</keyword>
<keyword id="KW-1185">Reference proteome</keyword>
<keyword id="KW-0804">Transcription</keyword>
<keyword id="KW-0805">Transcription regulation</keyword>
<protein>
    <recommendedName>
        <fullName>SWI/SNF chromatin-remodeling complex subunit SNF5</fullName>
    </recommendedName>
    <alternativeName>
        <fullName>SWI/SNF complex subunit SNF5</fullName>
    </alternativeName>
    <alternativeName>
        <fullName>Transcription factor TYE4</fullName>
    </alternativeName>
    <alternativeName>
        <fullName>Transcription regulatory protein SNF5</fullName>
    </alternativeName>
</protein>
<feature type="chain" id="PRO_0000205955" description="SWI/SNF chromatin-remodeling complex subunit SNF5">
    <location>
        <begin position="1"/>
        <end position="905"/>
    </location>
</feature>
<feature type="region of interest" description="Disordered" evidence="1">
    <location>
        <begin position="50"/>
        <end position="119"/>
    </location>
</feature>
<feature type="region of interest" description="Disordered" evidence="1">
    <location>
        <begin position="270"/>
        <end position="299"/>
    </location>
</feature>
<feature type="region of interest" description="Disordered" evidence="1">
    <location>
        <begin position="664"/>
        <end position="698"/>
    </location>
</feature>
<feature type="region of interest" description="Disordered" evidence="1">
    <location>
        <begin position="847"/>
        <end position="905"/>
    </location>
</feature>
<feature type="compositionally biased region" description="Low complexity" evidence="1">
    <location>
        <begin position="50"/>
        <end position="70"/>
    </location>
</feature>
<feature type="compositionally biased region" description="Pro residues" evidence="1">
    <location>
        <begin position="71"/>
        <end position="86"/>
    </location>
</feature>
<feature type="compositionally biased region" description="Low complexity" evidence="1">
    <location>
        <begin position="270"/>
        <end position="280"/>
    </location>
</feature>
<feature type="compositionally biased region" description="Polar residues" evidence="1">
    <location>
        <begin position="281"/>
        <end position="295"/>
    </location>
</feature>
<feature type="compositionally biased region" description="Basic residues" evidence="1">
    <location>
        <begin position="672"/>
        <end position="682"/>
    </location>
</feature>
<feature type="compositionally biased region" description="Polar residues" evidence="1">
    <location>
        <begin position="689"/>
        <end position="698"/>
    </location>
</feature>
<feature type="compositionally biased region" description="Polar residues" evidence="1">
    <location>
        <begin position="847"/>
        <end position="856"/>
    </location>
</feature>
<feature type="compositionally biased region" description="Pro residues" evidence="1">
    <location>
        <begin position="872"/>
        <end position="881"/>
    </location>
</feature>
<feature type="compositionally biased region" description="Low complexity" evidence="1">
    <location>
        <begin position="891"/>
        <end position="905"/>
    </location>
</feature>
<feature type="modified residue" description="Phosphoserine" evidence="5 6">
    <location>
        <position position="818"/>
    </location>
</feature>
<feature type="sequence conflict" description="In Ref. 2; CAA53652 and 3; CAA85254." evidence="4" ref="2 3">
    <original>D</original>
    <variation>E</variation>
    <location>
        <position position="564"/>
    </location>
</feature>
<feature type="helix" evidence="8">
    <location>
        <begin position="324"/>
        <end position="326"/>
    </location>
</feature>
<feature type="turn" evidence="8">
    <location>
        <begin position="327"/>
        <end position="329"/>
    </location>
</feature>
<feature type="helix" evidence="8">
    <location>
        <begin position="334"/>
        <end position="356"/>
    </location>
</feature>
<feature type="helix" evidence="8">
    <location>
        <begin position="371"/>
        <end position="399"/>
    </location>
</feature>
<feature type="strand" evidence="8">
    <location>
        <begin position="422"/>
        <end position="428"/>
    </location>
</feature>
<feature type="strand" evidence="8">
    <location>
        <begin position="432"/>
        <end position="434"/>
    </location>
</feature>
<feature type="helix" evidence="8">
    <location>
        <begin position="442"/>
        <end position="449"/>
    </location>
</feature>
<feature type="strand" evidence="7">
    <location>
        <begin position="457"/>
        <end position="464"/>
    </location>
</feature>
<feature type="turn" evidence="7">
    <location>
        <begin position="466"/>
        <end position="468"/>
    </location>
</feature>
<feature type="strand" evidence="7">
    <location>
        <begin position="469"/>
        <end position="471"/>
    </location>
</feature>
<feature type="strand" evidence="7">
    <location>
        <begin position="473"/>
        <end position="480"/>
    </location>
</feature>
<feature type="helix" evidence="7">
    <location>
        <begin position="488"/>
        <end position="495"/>
    </location>
</feature>
<feature type="turn" evidence="7">
    <location>
        <begin position="496"/>
        <end position="498"/>
    </location>
</feature>
<feature type="helix" evidence="7">
    <location>
        <begin position="506"/>
        <end position="523"/>
    </location>
</feature>
<feature type="turn" evidence="7">
    <location>
        <begin position="529"/>
        <end position="531"/>
    </location>
</feature>
<feature type="strand" evidence="7">
    <location>
        <begin position="543"/>
        <end position="552"/>
    </location>
</feature>
<feature type="strand" evidence="7">
    <location>
        <begin position="555"/>
        <end position="564"/>
    </location>
</feature>
<feature type="helix" evidence="7">
    <location>
        <begin position="572"/>
        <end position="582"/>
    </location>
</feature>
<feature type="helix" evidence="7">
    <location>
        <begin position="589"/>
        <end position="610"/>
    </location>
</feature>
<feature type="strand" evidence="7">
    <location>
        <begin position="615"/>
        <end position="617"/>
    </location>
</feature>
<feature type="helix" evidence="7">
    <location>
        <begin position="623"/>
        <end position="628"/>
    </location>
</feature>
<feature type="strand" evidence="7">
    <location>
        <begin position="637"/>
        <end position="639"/>
    </location>
</feature>
<feature type="helix" evidence="7">
    <location>
        <begin position="642"/>
        <end position="647"/>
    </location>
</feature>
<feature type="strand" evidence="7">
    <location>
        <begin position="651"/>
        <end position="654"/>
    </location>
</feature>
<feature type="helix" evidence="7">
    <location>
        <begin position="657"/>
        <end position="664"/>
    </location>
</feature>
<feature type="helix" evidence="9">
    <location>
        <begin position="666"/>
        <end position="679"/>
    </location>
</feature>
<feature type="strand" evidence="8">
    <location>
        <begin position="723"/>
        <end position="725"/>
    </location>
</feature>
<feature type="strand" evidence="8">
    <location>
        <begin position="737"/>
        <end position="739"/>
    </location>
</feature>
<organism>
    <name type="scientific">Saccharomyces cerevisiae (strain ATCC 204508 / S288c)</name>
    <name type="common">Baker's yeast</name>
    <dbReference type="NCBI Taxonomy" id="559292"/>
    <lineage>
        <taxon>Eukaryota</taxon>
        <taxon>Fungi</taxon>
        <taxon>Dikarya</taxon>
        <taxon>Ascomycota</taxon>
        <taxon>Saccharomycotina</taxon>
        <taxon>Saccharomycetes</taxon>
        <taxon>Saccharomycetales</taxon>
        <taxon>Saccharomycetaceae</taxon>
        <taxon>Saccharomyces</taxon>
    </lineage>
</organism>
<evidence type="ECO:0000256" key="1">
    <source>
        <dbReference type="SAM" id="MobiDB-lite"/>
    </source>
</evidence>
<evidence type="ECO:0000269" key="2">
    <source>
    </source>
</evidence>
<evidence type="ECO:0000269" key="3">
    <source>
    </source>
</evidence>
<evidence type="ECO:0000305" key="4"/>
<evidence type="ECO:0007744" key="5">
    <source>
    </source>
</evidence>
<evidence type="ECO:0007744" key="6">
    <source>
    </source>
</evidence>
<evidence type="ECO:0007829" key="7">
    <source>
        <dbReference type="PDB" id="6L9J"/>
    </source>
</evidence>
<evidence type="ECO:0007829" key="8">
    <source>
        <dbReference type="PDB" id="7C4J"/>
    </source>
</evidence>
<evidence type="ECO:0007829" key="9">
    <source>
        <dbReference type="PDB" id="7EG6"/>
    </source>
</evidence>
<proteinExistence type="evidence at protein level"/>
<reference key="1">
    <citation type="journal article" date="1990" name="Mol. Cell. Biol.">
        <title>The SNF5 protein of Saccharomyces cerevisiae is a glutamine- and proline-rich transcriptional activator that affects expression of a broad spectrum of genes.</title>
        <authorList>
            <person name="Laurent B.C."/>
            <person name="Treitel M.A."/>
            <person name="Carlson M."/>
        </authorList>
    </citation>
    <scope>NUCLEOTIDE SEQUENCE [GENOMIC DNA]</scope>
    <source>
        <strain>MCY</strain>
    </source>
</reference>
<reference key="2">
    <citation type="journal article" date="1994" name="Yeast">
        <title>The sequence of a 32,420 bp segment located on the right arm of chromosome II from Saccharomyces cerevisiae.</title>
        <authorList>
            <person name="Holmstroem K."/>
            <person name="Brandt T."/>
            <person name="Kallesoe T."/>
        </authorList>
    </citation>
    <scope>NUCLEOTIDE SEQUENCE [GENOMIC DNA]</scope>
    <source>
        <strain>ATCC 204508 / S288c</strain>
    </source>
</reference>
<reference key="3">
    <citation type="journal article" date="1994" name="EMBO J.">
        <title>Complete DNA sequence of yeast chromosome II.</title>
        <authorList>
            <person name="Feldmann H."/>
            <person name="Aigle M."/>
            <person name="Aljinovic G."/>
            <person name="Andre B."/>
            <person name="Baclet M.C."/>
            <person name="Barthe C."/>
            <person name="Baur A."/>
            <person name="Becam A.-M."/>
            <person name="Biteau N."/>
            <person name="Boles E."/>
            <person name="Brandt T."/>
            <person name="Brendel M."/>
            <person name="Brueckner M."/>
            <person name="Bussereau F."/>
            <person name="Christiansen C."/>
            <person name="Contreras R."/>
            <person name="Crouzet M."/>
            <person name="Cziepluch C."/>
            <person name="Demolis N."/>
            <person name="Delaveau T."/>
            <person name="Doignon F."/>
            <person name="Domdey H."/>
            <person name="Duesterhus S."/>
            <person name="Dubois E."/>
            <person name="Dujon B."/>
            <person name="El Bakkoury M."/>
            <person name="Entian K.-D."/>
            <person name="Feuermann M."/>
            <person name="Fiers W."/>
            <person name="Fobo G.M."/>
            <person name="Fritz C."/>
            <person name="Gassenhuber J."/>
            <person name="Glansdorff N."/>
            <person name="Goffeau A."/>
            <person name="Grivell L.A."/>
            <person name="de Haan M."/>
            <person name="Hein C."/>
            <person name="Herbert C.J."/>
            <person name="Hollenberg C.P."/>
            <person name="Holmstroem K."/>
            <person name="Jacq C."/>
            <person name="Jacquet M."/>
            <person name="Jauniaux J.-C."/>
            <person name="Jonniaux J.-L."/>
            <person name="Kallesoee T."/>
            <person name="Kiesau P."/>
            <person name="Kirchrath L."/>
            <person name="Koetter P."/>
            <person name="Korol S."/>
            <person name="Liebl S."/>
            <person name="Logghe M."/>
            <person name="Lohan A.J.E."/>
            <person name="Louis E.J."/>
            <person name="Li Z.Y."/>
            <person name="Maat M.J."/>
            <person name="Mallet L."/>
            <person name="Mannhaupt G."/>
            <person name="Messenguy F."/>
            <person name="Miosga T."/>
            <person name="Molemans F."/>
            <person name="Mueller S."/>
            <person name="Nasr F."/>
            <person name="Obermaier B."/>
            <person name="Perea J."/>
            <person name="Pierard A."/>
            <person name="Piravandi E."/>
            <person name="Pohl F.M."/>
            <person name="Pohl T.M."/>
            <person name="Potier S."/>
            <person name="Proft M."/>
            <person name="Purnelle B."/>
            <person name="Ramezani Rad M."/>
            <person name="Rieger M."/>
            <person name="Rose M."/>
            <person name="Schaaff-Gerstenschlaeger I."/>
            <person name="Scherens B."/>
            <person name="Schwarzlose C."/>
            <person name="Skala J."/>
            <person name="Slonimski P.P."/>
            <person name="Smits P.H.M."/>
            <person name="Souciet J.-L."/>
            <person name="Steensma H.Y."/>
            <person name="Stucka R."/>
            <person name="Urrestarazu L.A."/>
            <person name="van der Aart Q.J.M."/>
            <person name="Van Dyck L."/>
            <person name="Vassarotti A."/>
            <person name="Vetter I."/>
            <person name="Vierendeels F."/>
            <person name="Vissers S."/>
            <person name="Wagner G."/>
            <person name="de Wergifosse P."/>
            <person name="Wolfe K.H."/>
            <person name="Zagulski M."/>
            <person name="Zimmermann F.K."/>
            <person name="Mewes H.-W."/>
            <person name="Kleine K."/>
        </authorList>
    </citation>
    <scope>NUCLEOTIDE SEQUENCE [LARGE SCALE GENOMIC DNA]</scope>
    <source>
        <strain>ATCC 204508 / S288c</strain>
    </source>
</reference>
<reference key="4">
    <citation type="journal article" date="2014" name="G3 (Bethesda)">
        <title>The reference genome sequence of Saccharomyces cerevisiae: Then and now.</title>
        <authorList>
            <person name="Engel S.R."/>
            <person name="Dietrich F.S."/>
            <person name="Fisk D.G."/>
            <person name="Binkley G."/>
            <person name="Balakrishnan R."/>
            <person name="Costanzo M.C."/>
            <person name="Dwight S.S."/>
            <person name="Hitz B.C."/>
            <person name="Karra K."/>
            <person name="Nash R.S."/>
            <person name="Weng S."/>
            <person name="Wong E.D."/>
            <person name="Lloyd P."/>
            <person name="Skrzypek M.S."/>
            <person name="Miyasato S.R."/>
            <person name="Simison M."/>
            <person name="Cherry J.M."/>
        </authorList>
    </citation>
    <scope>GENOME REANNOTATION</scope>
    <scope>SEQUENCE REVISION TO 564</scope>
    <source>
        <strain>ATCC 204508 / S288c</strain>
    </source>
</reference>
<reference key="5">
    <citation type="journal article" date="2003" name="Nature">
        <title>Global analysis of protein localization in budding yeast.</title>
        <authorList>
            <person name="Huh W.-K."/>
            <person name="Falvo J.V."/>
            <person name="Gerke L.C."/>
            <person name="Carroll A.S."/>
            <person name="Howson R.W."/>
            <person name="Weissman J.S."/>
            <person name="O'Shea E.K."/>
        </authorList>
    </citation>
    <scope>SUBCELLULAR LOCATION [LARGE SCALE ANALYSIS]</scope>
</reference>
<reference key="6">
    <citation type="journal article" date="2003" name="Nature">
        <title>Global analysis of protein expression in yeast.</title>
        <authorList>
            <person name="Ghaemmaghami S."/>
            <person name="Huh W.-K."/>
            <person name="Bower K."/>
            <person name="Howson R.W."/>
            <person name="Belle A."/>
            <person name="Dephoure N."/>
            <person name="O'Shea E.K."/>
            <person name="Weissman J.S."/>
        </authorList>
    </citation>
    <scope>LEVEL OF PROTEIN EXPRESSION [LARGE SCALE ANALYSIS]</scope>
</reference>
<reference key="7">
    <citation type="journal article" date="2008" name="Mol. Cell. Proteomics">
        <title>A multidimensional chromatography technology for in-depth phosphoproteome analysis.</title>
        <authorList>
            <person name="Albuquerque C.P."/>
            <person name="Smolka M.B."/>
            <person name="Payne S.H."/>
            <person name="Bafna V."/>
            <person name="Eng J."/>
            <person name="Zhou H."/>
        </authorList>
    </citation>
    <scope>PHOSPHORYLATION [LARGE SCALE ANALYSIS] AT SER-818</scope>
    <scope>IDENTIFICATION BY MASS SPECTROMETRY [LARGE SCALE ANALYSIS]</scope>
</reference>
<reference key="8">
    <citation type="journal article" date="2009" name="Science">
        <title>Global analysis of Cdk1 substrate phosphorylation sites provides insights into evolution.</title>
        <authorList>
            <person name="Holt L.J."/>
            <person name="Tuch B.B."/>
            <person name="Villen J."/>
            <person name="Johnson A.D."/>
            <person name="Gygi S.P."/>
            <person name="Morgan D.O."/>
        </authorList>
    </citation>
    <scope>PHOSPHORYLATION [LARGE SCALE ANALYSIS] AT SER-818</scope>
    <scope>IDENTIFICATION BY MASS SPECTROMETRY [LARGE SCALE ANALYSIS]</scope>
</reference>
<reference key="9">
    <citation type="journal article" date="2003" name="Nat. Struct. Biol.">
        <title>Structural analysis of the yeast SWI/SNF chromatin remodeling complex.</title>
        <authorList>
            <person name="Smith C.L."/>
            <person name="Horowitz-Scherer R."/>
            <person name="Flanagan J.F."/>
            <person name="Woodcock C.L."/>
            <person name="Peterson C.L."/>
        </authorList>
    </citation>
    <scope>3D-STRUCTURE MODELING OF THE SWI/SNF COMPLEX</scope>
    <scope>ELECTRON MICROSCOPY OF THE SWI/SNF COMPLEX</scope>
</reference>
<name>SNF5_YEAST</name>
<dbReference type="EMBL" id="M36482">
    <property type="protein sequence ID" value="AAA35062.1"/>
    <property type="molecule type" value="Genomic_DNA"/>
</dbReference>
<dbReference type="EMBL" id="X76053">
    <property type="protein sequence ID" value="CAA53652.1"/>
    <property type="molecule type" value="Genomic_DNA"/>
</dbReference>
<dbReference type="EMBL" id="Z36158">
    <property type="protein sequence ID" value="CAA85254.1"/>
    <property type="molecule type" value="Genomic_DNA"/>
</dbReference>
<dbReference type="EMBL" id="BK006936">
    <property type="protein sequence ID" value="DAA07404.2"/>
    <property type="molecule type" value="Genomic_DNA"/>
</dbReference>
<dbReference type="PIR" id="S44551">
    <property type="entry name" value="RGBYS5"/>
</dbReference>
<dbReference type="RefSeq" id="NP_009848.4">
    <property type="nucleotide sequence ID" value="NM_001178637.4"/>
</dbReference>
<dbReference type="PDB" id="6L9J">
    <property type="method" value="X-ray"/>
    <property type="resolution" value="2.64 A"/>
    <property type="chains" value="A/D/G/J=454-680"/>
</dbReference>
<dbReference type="PDB" id="6UXV">
    <property type="method" value="EM"/>
    <property type="resolution" value="4.70 A"/>
    <property type="chains" value="C=1-905"/>
</dbReference>
<dbReference type="PDB" id="6UXW">
    <property type="method" value="EM"/>
    <property type="resolution" value="8.96 A"/>
    <property type="chains" value="C=1-905"/>
</dbReference>
<dbReference type="PDB" id="7C4J">
    <property type="method" value="EM"/>
    <property type="resolution" value="2.89 A"/>
    <property type="chains" value="F=1-905"/>
</dbReference>
<dbReference type="PDB" id="7EG6">
    <property type="method" value="EM"/>
    <property type="resolution" value="3.10 A"/>
    <property type="chains" value="M=1-905"/>
</dbReference>
<dbReference type="PDB" id="7EGM">
    <property type="method" value="EM"/>
    <property type="resolution" value="3.60 A"/>
    <property type="chains" value="C=1-905"/>
</dbReference>
<dbReference type="PDB" id="7EGP">
    <property type="method" value="EM"/>
    <property type="resolution" value="6.90 A"/>
    <property type="chains" value="C=1-905"/>
</dbReference>
<dbReference type="PDBsum" id="6L9J"/>
<dbReference type="PDBsum" id="6UXV"/>
<dbReference type="PDBsum" id="6UXW"/>
<dbReference type="PDBsum" id="7C4J"/>
<dbReference type="PDBsum" id="7EG6"/>
<dbReference type="PDBsum" id="7EGM"/>
<dbReference type="PDBsum" id="7EGP"/>
<dbReference type="EMDB" id="EMD-20933"/>
<dbReference type="EMDB" id="EMD-20934"/>
<dbReference type="EMDB" id="EMD-30285"/>
<dbReference type="EMDB" id="EMD-31106"/>
<dbReference type="EMDB" id="EMD-31136"/>
<dbReference type="EMDB" id="EMD-31137"/>
<dbReference type="SMR" id="P18480"/>
<dbReference type="BioGRID" id="32983">
    <property type="interactions" value="520"/>
</dbReference>
<dbReference type="ComplexPortal" id="CPX-1150">
    <property type="entry name" value="SWI/SNF chromatin remodelling complex"/>
</dbReference>
<dbReference type="DIP" id="DIP-2364N"/>
<dbReference type="FunCoup" id="P18480">
    <property type="interactions" value="584"/>
</dbReference>
<dbReference type="IntAct" id="P18480">
    <property type="interactions" value="50"/>
</dbReference>
<dbReference type="MINT" id="P18480"/>
<dbReference type="STRING" id="4932.YBR289W"/>
<dbReference type="GlyGen" id="P18480">
    <property type="glycosylation" value="3 sites, 1 O-linked glycan (1 site)"/>
</dbReference>
<dbReference type="iPTMnet" id="P18480"/>
<dbReference type="PaxDb" id="4932-YBR289W"/>
<dbReference type="PeptideAtlas" id="P18480"/>
<dbReference type="EnsemblFungi" id="YBR289W_mRNA">
    <property type="protein sequence ID" value="YBR289W"/>
    <property type="gene ID" value="YBR289W"/>
</dbReference>
<dbReference type="GeneID" id="852592"/>
<dbReference type="KEGG" id="sce:YBR289W"/>
<dbReference type="AGR" id="SGD:S000000493"/>
<dbReference type="SGD" id="S000000493">
    <property type="gene designation" value="SNF5"/>
</dbReference>
<dbReference type="VEuPathDB" id="FungiDB:YBR289W"/>
<dbReference type="eggNOG" id="KOG1649">
    <property type="taxonomic scope" value="Eukaryota"/>
</dbReference>
<dbReference type="GeneTree" id="ENSGT00440000038585"/>
<dbReference type="HOGENOM" id="CLU_011216_0_0_1"/>
<dbReference type="InParanoid" id="P18480"/>
<dbReference type="OMA" id="EQVHMYH"/>
<dbReference type="OrthoDB" id="515064at2759"/>
<dbReference type="BioCyc" id="YEAST:G3O-29208-MONOMER"/>
<dbReference type="BioGRID-ORCS" id="852592">
    <property type="hits" value="10 hits in 10 CRISPR screens"/>
</dbReference>
<dbReference type="PRO" id="PR:P18480"/>
<dbReference type="Proteomes" id="UP000002311">
    <property type="component" value="Chromosome II"/>
</dbReference>
<dbReference type="RNAct" id="P18480">
    <property type="molecule type" value="protein"/>
</dbReference>
<dbReference type="GO" id="GO:0000785">
    <property type="term" value="C:chromatin"/>
    <property type="evidence" value="ECO:0000303"/>
    <property type="project" value="ComplexPortal"/>
</dbReference>
<dbReference type="GO" id="GO:0005829">
    <property type="term" value="C:cytosol"/>
    <property type="evidence" value="ECO:0000314"/>
    <property type="project" value="SGD"/>
</dbReference>
<dbReference type="GO" id="GO:0000228">
    <property type="term" value="C:nuclear chromosome"/>
    <property type="evidence" value="ECO:0007669"/>
    <property type="project" value="InterPro"/>
</dbReference>
<dbReference type="GO" id="GO:0005634">
    <property type="term" value="C:nucleus"/>
    <property type="evidence" value="ECO:0000314"/>
    <property type="project" value="SGD"/>
</dbReference>
<dbReference type="GO" id="GO:0016514">
    <property type="term" value="C:SWI/SNF complex"/>
    <property type="evidence" value="ECO:0000314"/>
    <property type="project" value="SGD"/>
</dbReference>
<dbReference type="GO" id="GO:0061629">
    <property type="term" value="F:RNA polymerase II-specific DNA-binding transcription factor binding"/>
    <property type="evidence" value="ECO:0000315"/>
    <property type="project" value="SGD"/>
</dbReference>
<dbReference type="GO" id="GO:0045991">
    <property type="term" value="P:carbon catabolite activation of transcription"/>
    <property type="evidence" value="ECO:0000316"/>
    <property type="project" value="SGD"/>
</dbReference>
<dbReference type="GO" id="GO:0006338">
    <property type="term" value="P:chromatin remodeling"/>
    <property type="evidence" value="ECO:0000314"/>
    <property type="project" value="ComplexPortal"/>
</dbReference>
<dbReference type="GO" id="GO:0000724">
    <property type="term" value="P:double-strand break repair via homologous recombination"/>
    <property type="evidence" value="ECO:0000315"/>
    <property type="project" value="SGD"/>
</dbReference>
<dbReference type="GO" id="GO:2000219">
    <property type="term" value="P:positive regulation of invasive growth in response to glucose limitation"/>
    <property type="evidence" value="ECO:0000315"/>
    <property type="project" value="SGD"/>
</dbReference>
<dbReference type="GO" id="GO:0045944">
    <property type="term" value="P:positive regulation of transcription by RNA polymerase II"/>
    <property type="evidence" value="ECO:0000315"/>
    <property type="project" value="SGD"/>
</dbReference>
<dbReference type="GO" id="GO:0006357">
    <property type="term" value="P:regulation of transcription by RNA polymerase II"/>
    <property type="evidence" value="ECO:0000314"/>
    <property type="project" value="ComplexPortal"/>
</dbReference>
<dbReference type="InterPro" id="IPR006939">
    <property type="entry name" value="SNF5"/>
</dbReference>
<dbReference type="PANTHER" id="PTHR10019">
    <property type="entry name" value="SNF5"/>
    <property type="match status" value="1"/>
</dbReference>
<dbReference type="Pfam" id="PF04855">
    <property type="entry name" value="SNF5"/>
    <property type="match status" value="1"/>
</dbReference>
<comment type="function">
    <text>Involved in transcriptional activation. Component of the SWI/SNF complex, an ATP-dependent chromatin-remodeling complex, which is required for the positive and negative regulation of gene expression of a large number of genes. It changes chromatin structure by altering DNA-histone contacts within a nucleosome, leading eventually to a change in nucleosome position, thus facilitating or repressing binding of gene-specific transcription factors.</text>
</comment>
<comment type="subunit">
    <text>Component of the SWI/SNF global transcription activator complex. The 1.14 MDa SWI/SNF complex is composed of 11 different subunits: one copy each of SWI1, SNF2/SWI2, SNF5, SNF12/SWP73, ARP7/SWP61, ARP9/SWP59; two copies each of SWI3, SNF6, SNF11, SWP82; and three copies of TAF14/SWP29.</text>
</comment>
<comment type="interaction">
    <interactant intactId="EBI-17546">
        <id>P18480</id>
    </interactant>
    <interactant intactId="EBI-18920">
        <id>P35189</id>
        <label>TAF14</label>
    </interactant>
    <organismsDiffer>false</organismsDiffer>
    <experiments>3</experiments>
</comment>
<comment type="subcellular location">
    <subcellularLocation>
        <location evidence="2">Nucleus</location>
    </subcellularLocation>
</comment>
<comment type="miscellaneous">
    <text evidence="3">Present with 217 molecules/cell in log phase SD medium.</text>
</comment>
<comment type="similarity">
    <text evidence="4">Belongs to the SNF5 family.</text>
</comment>
<gene>
    <name type="primary">SNF5</name>
    <name type="synonym">SWI10</name>
    <name type="synonym">TYE4</name>
    <name type="ordered locus">YBR289W</name>
    <name type="ORF">YBR2036</name>
</gene>
<sequence>MNNQPQGTNSVPNSIGNIFSNIGTPSFNMAQIPQQLYQSLTPQQLQMIQQRHQQLLRSRLQQQQQQQQQTSPPPQTHQSPPPPPQQSQPIANQSATSTPPPPPAPHNLHPQIGQVPLAPAPINLPPQIAQLPLATQQQVLNKLRQQAIAKNNPQVVNAITVAQQQVQRQIEQQKGQQTAQTQLEQQRQLLVQQQQQQQLRNQIQRQQQQQFRHHVQIQQQQQKQQQQQQQHQQQQQQQQQQQQQQQQQQQQQQQQQQQQQQQQQQQQQGQIPQSQQVPQVRSMSGQPPTNVQPTIGQLPQLPKLNLPKYQTIQYDPPETKLPYPTYWSDKKADTDTLLYEQIIQRDKINKYSLIRETNGYDPFSIYGFSNKEYISRLWHTLKYYQDLKNTRMKSITSTSQKIPSASIWGNGYSGYGNGITNTTTRVIPQVEVGNRKHYLEDKLKVYKQAMNETSEQLVPIRLEFDQDRDRFFLRDTLLWNKNDKLIKIEDFVDDMLRDYRFEDATREQHIDTICQSIQEQIQEFQGNPYIELNQDRLGGDDLRIRIKLDIVVGQNQLIDQFEWDISNSDNCPEEFAESMCQELELPGEFVTAIAHSIREQVHMYHKSLALLGYNFDGSAIEDDDIRSRMLPTITLDDVYRPAAESKIFTPNLLQISAAELERLDKDKDRDTRRKRRQGRSNRRGMLALSGTSASNTSMNGVHNTVAAGNASSLPPGEILLPDIADIPRTFRTPVPSTLMPGGVDVGPSVESYELRNTTTYKSRPDRPKPVSPPCYIIDHIPGHSLLLSIKLPGKVNTKEEFAAAPNDTSSGTNAMLPSPESLKTKLNSNIRAGVTIPSIPNPIANHTVTNSPNPTLQPVIPGGAASKSVPTPSLPIAPPVAPHDSEATLLTNSNNGSSNNNTQNT</sequence>
<accession>P18480</accession>
<accession>D6VQT4</accession>